<gene>
    <name type="primary">Neurog2</name>
    <name type="synonym">Ath4a</name>
    <name type="synonym">Atoh4</name>
    <name type="synonym">Ngn2</name>
</gene>
<evidence type="ECO:0000255" key="1">
    <source>
        <dbReference type="PROSITE-ProRule" id="PRU00981"/>
    </source>
</evidence>
<evidence type="ECO:0000256" key="2">
    <source>
        <dbReference type="SAM" id="MobiDB-lite"/>
    </source>
</evidence>
<evidence type="ECO:0000269" key="3">
    <source>
    </source>
</evidence>
<evidence type="ECO:0000305" key="4"/>
<organism>
    <name type="scientific">Mus musculus</name>
    <name type="common">Mouse</name>
    <dbReference type="NCBI Taxonomy" id="10090"/>
    <lineage>
        <taxon>Eukaryota</taxon>
        <taxon>Metazoa</taxon>
        <taxon>Chordata</taxon>
        <taxon>Craniata</taxon>
        <taxon>Vertebrata</taxon>
        <taxon>Euteleostomi</taxon>
        <taxon>Mammalia</taxon>
        <taxon>Eutheria</taxon>
        <taxon>Euarchontoglires</taxon>
        <taxon>Glires</taxon>
        <taxon>Rodentia</taxon>
        <taxon>Myomorpha</taxon>
        <taxon>Muroidea</taxon>
        <taxon>Muridae</taxon>
        <taxon>Murinae</taxon>
        <taxon>Mus</taxon>
        <taxon>Mus</taxon>
    </lineage>
</organism>
<proteinExistence type="evidence at protein level"/>
<feature type="chain" id="PRO_0000127401" description="Neurogenin-2">
    <location>
        <begin position="1"/>
        <end position="263"/>
    </location>
</feature>
<feature type="domain" description="bHLH" evidence="1">
    <location>
        <begin position="112"/>
        <end position="164"/>
    </location>
</feature>
<feature type="region of interest" description="Disordered" evidence="2">
    <location>
        <begin position="20"/>
        <end position="76"/>
    </location>
</feature>
<feature type="region of interest" description="Disordered" evidence="2">
    <location>
        <begin position="197"/>
        <end position="253"/>
    </location>
</feature>
<feature type="compositionally biased region" description="Polar residues" evidence="2">
    <location>
        <begin position="24"/>
        <end position="36"/>
    </location>
</feature>
<feature type="compositionally biased region" description="Low complexity" evidence="2">
    <location>
        <begin position="197"/>
        <end position="231"/>
    </location>
</feature>
<feature type="sequence conflict" description="In Ref. 2; CAA68900." evidence="4" ref="2">
    <original>E</original>
    <variation>G</variation>
    <location>
        <position position="60"/>
    </location>
</feature>
<comment type="function">
    <text evidence="3">Transcriptional regulator. Involved in neuronal differentiation. Activates transcription by binding to the E box (5'-CANNTG-3').</text>
</comment>
<comment type="subunit">
    <text>Efficient DNA binding requires dimerization with another bHLH protein.</text>
</comment>
<comment type="subcellular location">
    <subcellularLocation>
        <location evidence="1">Nucleus</location>
    </subcellularLocation>
</comment>
<reference key="1">
    <citation type="journal article" date="1996" name="Mol. Cell. Neurosci.">
        <title>Neurogenins, a novel family of atonal-related bHLH transcription factors, are putative mammalian neuronal determination genes that reveal progenitor cell heterogeneity in the developing CNS and PNS.</title>
        <authorList>
            <person name="Sommer L."/>
            <person name="Ma Q."/>
            <person name="Anderson D.J."/>
        </authorList>
    </citation>
    <scope>NUCLEOTIDE SEQUENCE [GENOMIC DNA]</scope>
</reference>
<reference key="2">
    <citation type="journal article" date="1996" name="Dev. Biol.">
        <title>Restricted expression of a novel murine atonal-related bHLH protein in undifferentiated neural precursors.</title>
        <authorList>
            <person name="Gradwohl G."/>
            <person name="Fode C."/>
            <person name="Guillemot F."/>
        </authorList>
    </citation>
    <scope>NUCLEOTIDE SEQUENCE [MRNA]</scope>
    <source>
        <strain>CD-1</strain>
    </source>
</reference>
<reference key="3">
    <citation type="submission" date="2000-09" db="EMBL/GenBank/DDBJ databases">
        <title>Neurogenin 2 expression in ventral and dorsal spinal neural tube progenitor cells is regulated by distinct enhancers.</title>
        <authorList>
            <person name="Simmons A.D."/>
            <person name="Horton S."/>
            <person name="Abney A.L."/>
            <person name="Johnson J.E."/>
        </authorList>
    </citation>
    <scope>NUCLEOTIDE SEQUENCE</scope>
    <source>
        <strain>129</strain>
    </source>
</reference>
<reference key="4">
    <citation type="journal article" date="2004" name="Dev. Biol.">
        <title>Regulation of neuroD2 expression in mouse brain.</title>
        <authorList>
            <person name="Lin C.H."/>
            <person name="Stoeck J."/>
            <person name="Ravanpay A.C."/>
            <person name="Guillemot F."/>
            <person name="Tapscott S.J."/>
            <person name="Olson J.M."/>
        </authorList>
    </citation>
    <scope>FUNCTION</scope>
    <scope>DNA-BINDING</scope>
</reference>
<accession>P70447</accession>
<accession>P70237</accession>
<dbReference type="EMBL" id="U76207">
    <property type="protein sequence ID" value="AAC53028.1"/>
    <property type="molecule type" value="Genomic_DNA"/>
</dbReference>
<dbReference type="EMBL" id="Y07621">
    <property type="protein sequence ID" value="CAA68900.1"/>
    <property type="molecule type" value="mRNA"/>
</dbReference>
<dbReference type="EMBL" id="AF303001">
    <property type="protein sequence ID" value="AAG40769.1"/>
    <property type="molecule type" value="Genomic_DNA"/>
</dbReference>
<dbReference type="CCDS" id="CCDS17825.1"/>
<dbReference type="RefSeq" id="NP_033848.1">
    <property type="nucleotide sequence ID" value="NM_009718.2"/>
</dbReference>
<dbReference type="SMR" id="P70447"/>
<dbReference type="BioGRID" id="198240">
    <property type="interactions" value="5"/>
</dbReference>
<dbReference type="FunCoup" id="P70447">
    <property type="interactions" value="973"/>
</dbReference>
<dbReference type="STRING" id="10090.ENSMUSP00000029587"/>
<dbReference type="iPTMnet" id="P70447"/>
<dbReference type="PhosphoSitePlus" id="P70447"/>
<dbReference type="PaxDb" id="10090-ENSMUSP00000029587"/>
<dbReference type="DNASU" id="11924"/>
<dbReference type="GeneID" id="11924"/>
<dbReference type="KEGG" id="mmu:11924"/>
<dbReference type="AGR" id="MGI:109619"/>
<dbReference type="CTD" id="63973"/>
<dbReference type="MGI" id="MGI:109619">
    <property type="gene designation" value="Neurog2"/>
</dbReference>
<dbReference type="eggNOG" id="KOG3898">
    <property type="taxonomic scope" value="Eukaryota"/>
</dbReference>
<dbReference type="InParanoid" id="P70447"/>
<dbReference type="OrthoDB" id="5969565at2759"/>
<dbReference type="BioGRID-ORCS" id="11924">
    <property type="hits" value="3 hits in 81 CRISPR screens"/>
</dbReference>
<dbReference type="PRO" id="PR:P70447"/>
<dbReference type="Proteomes" id="UP000000589">
    <property type="component" value="Unplaced"/>
</dbReference>
<dbReference type="RNAct" id="P70447">
    <property type="molecule type" value="protein"/>
</dbReference>
<dbReference type="GO" id="GO:0005634">
    <property type="term" value="C:nucleus"/>
    <property type="evidence" value="ECO:0000314"/>
    <property type="project" value="MGI"/>
</dbReference>
<dbReference type="GO" id="GO:0070888">
    <property type="term" value="F:E-box binding"/>
    <property type="evidence" value="ECO:0000314"/>
    <property type="project" value="UniProtKB"/>
</dbReference>
<dbReference type="GO" id="GO:0046983">
    <property type="term" value="F:protein dimerization activity"/>
    <property type="evidence" value="ECO:0007669"/>
    <property type="project" value="InterPro"/>
</dbReference>
<dbReference type="GO" id="GO:0043565">
    <property type="term" value="F:sequence-specific DNA binding"/>
    <property type="evidence" value="ECO:0000314"/>
    <property type="project" value="MGI"/>
</dbReference>
<dbReference type="GO" id="GO:0007411">
    <property type="term" value="P:axon guidance"/>
    <property type="evidence" value="ECO:0000315"/>
    <property type="project" value="MGI"/>
</dbReference>
<dbReference type="GO" id="GO:0021870">
    <property type="term" value="P:Cajal-Retzius cell differentiation"/>
    <property type="evidence" value="ECO:0000314"/>
    <property type="project" value="MGI"/>
</dbReference>
<dbReference type="GO" id="GO:0045165">
    <property type="term" value="P:cell fate commitment"/>
    <property type="evidence" value="ECO:0000316"/>
    <property type="project" value="MGI"/>
</dbReference>
<dbReference type="GO" id="GO:0048469">
    <property type="term" value="P:cell maturation"/>
    <property type="evidence" value="ECO:0000315"/>
    <property type="project" value="MGI"/>
</dbReference>
<dbReference type="GO" id="GO:0021954">
    <property type="term" value="P:central nervous system neuron development"/>
    <property type="evidence" value="ECO:0000315"/>
    <property type="project" value="MGI"/>
</dbReference>
<dbReference type="GO" id="GO:0071542">
    <property type="term" value="P:dopaminergic neuron differentiation"/>
    <property type="evidence" value="ECO:0000315"/>
    <property type="project" value="MGI"/>
</dbReference>
<dbReference type="GO" id="GO:0030900">
    <property type="term" value="P:forebrain development"/>
    <property type="evidence" value="ECO:0000315"/>
    <property type="project" value="MGI"/>
</dbReference>
<dbReference type="GO" id="GO:0022008">
    <property type="term" value="P:neurogenesis"/>
    <property type="evidence" value="ECO:0000314"/>
    <property type="project" value="MGI"/>
</dbReference>
<dbReference type="GO" id="GO:0030182">
    <property type="term" value="P:neuron differentiation"/>
    <property type="evidence" value="ECO:0000314"/>
    <property type="project" value="MGI"/>
</dbReference>
<dbReference type="GO" id="GO:0001764">
    <property type="term" value="P:neuron migration"/>
    <property type="evidence" value="ECO:0000315"/>
    <property type="project" value="MGI"/>
</dbReference>
<dbReference type="GO" id="GO:0051091">
    <property type="term" value="P:positive regulation of DNA-binding transcription factor activity"/>
    <property type="evidence" value="ECO:0000314"/>
    <property type="project" value="UniProtKB"/>
</dbReference>
<dbReference type="GO" id="GO:2000979">
    <property type="term" value="P:positive regulation of forebrain neuron differentiation"/>
    <property type="evidence" value="ECO:0000314"/>
    <property type="project" value="MGI"/>
</dbReference>
<dbReference type="GO" id="GO:0045944">
    <property type="term" value="P:positive regulation of transcription by RNA polymerase II"/>
    <property type="evidence" value="ECO:0000314"/>
    <property type="project" value="MGI"/>
</dbReference>
<dbReference type="CDD" id="cd19717">
    <property type="entry name" value="bHLH_TS_NGN2_ATOH4"/>
    <property type="match status" value="1"/>
</dbReference>
<dbReference type="DisProt" id="DP02061"/>
<dbReference type="FunFam" id="4.10.280.10:FF:000006">
    <property type="entry name" value="Neurogenic differentiation factor"/>
    <property type="match status" value="1"/>
</dbReference>
<dbReference type="Gene3D" id="4.10.280.10">
    <property type="entry name" value="Helix-loop-helix DNA-binding domain"/>
    <property type="match status" value="1"/>
</dbReference>
<dbReference type="InterPro" id="IPR011598">
    <property type="entry name" value="bHLH_dom"/>
</dbReference>
<dbReference type="InterPro" id="IPR050359">
    <property type="entry name" value="bHLH_transcription_factors"/>
</dbReference>
<dbReference type="InterPro" id="IPR036638">
    <property type="entry name" value="HLH_DNA-bd_sf"/>
</dbReference>
<dbReference type="InterPro" id="IPR032655">
    <property type="entry name" value="Ngn-2_bHLH"/>
</dbReference>
<dbReference type="PANTHER" id="PTHR19290">
    <property type="entry name" value="BASIC HELIX-LOOP-HELIX PROTEIN NEUROGENIN-RELATED"/>
    <property type="match status" value="1"/>
</dbReference>
<dbReference type="PANTHER" id="PTHR19290:SF171">
    <property type="entry name" value="NEUROGENIN-2"/>
    <property type="match status" value="1"/>
</dbReference>
<dbReference type="Pfam" id="PF00010">
    <property type="entry name" value="HLH"/>
    <property type="match status" value="1"/>
</dbReference>
<dbReference type="SMART" id="SM00353">
    <property type="entry name" value="HLH"/>
    <property type="match status" value="1"/>
</dbReference>
<dbReference type="SUPFAM" id="SSF47459">
    <property type="entry name" value="HLH, helix-loop-helix DNA-binding domain"/>
    <property type="match status" value="1"/>
</dbReference>
<dbReference type="PROSITE" id="PS50888">
    <property type="entry name" value="BHLH"/>
    <property type="match status" value="1"/>
</dbReference>
<sequence>MFVKSETLELKEEEEVLMLLGSASPASATLTPMSSSADEEEDEELRRPGSARGQRGAEAEQGVQGSPASGAGGCRPGRLLGLMHECKRRPSRSRAVSRGAKTAETVQRIKKTRRLKANNRERNRMHNLNAALDALREVLPTFPEDAKLTKIETLRFAHNYIWALTETLRLADHCAGAGGLQGALFTEAVLLSPGAALGASGDSPSPPSSWSCTNSPASSSNSTSPYSCTLSPASPGSDVDYWQPPPPEKHRYAPHLPLARDCI</sequence>
<keyword id="KW-0010">Activator</keyword>
<keyword id="KW-0217">Developmental protein</keyword>
<keyword id="KW-0221">Differentiation</keyword>
<keyword id="KW-0238">DNA-binding</keyword>
<keyword id="KW-0524">Neurogenesis</keyword>
<keyword id="KW-0539">Nucleus</keyword>
<keyword id="KW-1185">Reference proteome</keyword>
<keyword id="KW-0804">Transcription</keyword>
<keyword id="KW-0805">Transcription regulation</keyword>
<protein>
    <recommendedName>
        <fullName>Neurogenin-2</fullName>
        <shortName>NGN-2</shortName>
    </recommendedName>
    <alternativeName>
        <fullName>Helix-loop-helix protein mATH-4A</fullName>
        <shortName>mATH4A</shortName>
    </alternativeName>
    <alternativeName>
        <fullName>Protein atonal homolog 4</fullName>
    </alternativeName>
</protein>
<name>NGN2_MOUSE</name>